<feature type="chain" id="PRO_0000349431" description="SWI/SNF chromatin-remodeling complex subunit snf30">
    <location>
        <begin position="1"/>
        <end position="274"/>
    </location>
</feature>
<feature type="region of interest" description="Disordered" evidence="1">
    <location>
        <begin position="123"/>
        <end position="167"/>
    </location>
</feature>
<feature type="compositionally biased region" description="Polar residues" evidence="1">
    <location>
        <begin position="123"/>
        <end position="150"/>
    </location>
</feature>
<feature type="compositionally biased region" description="Polar residues" evidence="1">
    <location>
        <begin position="157"/>
        <end position="167"/>
    </location>
</feature>
<name>SNF30_SCHPO</name>
<accession>Q9P7S6</accession>
<sequence length="274" mass="30423">MSFVSKSPPIVNSASPTGQVNPMEVEKANKLLEINRLILWKCLELQHIKTAQNSTLEQRALSTELFNSYIQRLKANLAFVVSIASPRQMQVLTPPLSCPESLPQLEPLYKELRQYFQIAQTSTLSYPPSNGDSSSYANGTDLHGNTGTMQQEEKANPSLTRSDSVSSGSYITMQGANSLKAQQDLLNSFTGAPSNNSHNIPDPNLSQTFSATSMGPPNNNYSKFRTDNYLARSSNRSGTPNIQNEQSRFFDSQQAQVQARALMQRYQQGMEFNK</sequence>
<evidence type="ECO:0000256" key="1">
    <source>
        <dbReference type="SAM" id="MobiDB-lite"/>
    </source>
</evidence>
<evidence type="ECO:0000269" key="2">
    <source>
    </source>
</evidence>
<evidence type="ECO:0000269" key="3">
    <source>
    </source>
</evidence>
<reference key="1">
    <citation type="journal article" date="2002" name="Nature">
        <title>The genome sequence of Schizosaccharomyces pombe.</title>
        <authorList>
            <person name="Wood V."/>
            <person name="Gwilliam R."/>
            <person name="Rajandream M.A."/>
            <person name="Lyne M.H."/>
            <person name="Lyne R."/>
            <person name="Stewart A."/>
            <person name="Sgouros J.G."/>
            <person name="Peat N."/>
            <person name="Hayles J."/>
            <person name="Baker S.G."/>
            <person name="Basham D."/>
            <person name="Bowman S."/>
            <person name="Brooks K."/>
            <person name="Brown D."/>
            <person name="Brown S."/>
            <person name="Chillingworth T."/>
            <person name="Churcher C.M."/>
            <person name="Collins M."/>
            <person name="Connor R."/>
            <person name="Cronin A."/>
            <person name="Davis P."/>
            <person name="Feltwell T."/>
            <person name="Fraser A."/>
            <person name="Gentles S."/>
            <person name="Goble A."/>
            <person name="Hamlin N."/>
            <person name="Harris D.E."/>
            <person name="Hidalgo J."/>
            <person name="Hodgson G."/>
            <person name="Holroyd S."/>
            <person name="Hornsby T."/>
            <person name="Howarth S."/>
            <person name="Huckle E.J."/>
            <person name="Hunt S."/>
            <person name="Jagels K."/>
            <person name="James K.D."/>
            <person name="Jones L."/>
            <person name="Jones M."/>
            <person name="Leather S."/>
            <person name="McDonald S."/>
            <person name="McLean J."/>
            <person name="Mooney P."/>
            <person name="Moule S."/>
            <person name="Mungall K.L."/>
            <person name="Murphy L.D."/>
            <person name="Niblett D."/>
            <person name="Odell C."/>
            <person name="Oliver K."/>
            <person name="O'Neil S."/>
            <person name="Pearson D."/>
            <person name="Quail M.A."/>
            <person name="Rabbinowitsch E."/>
            <person name="Rutherford K.M."/>
            <person name="Rutter S."/>
            <person name="Saunders D."/>
            <person name="Seeger K."/>
            <person name="Sharp S."/>
            <person name="Skelton J."/>
            <person name="Simmonds M.N."/>
            <person name="Squares R."/>
            <person name="Squares S."/>
            <person name="Stevens K."/>
            <person name="Taylor K."/>
            <person name="Taylor R.G."/>
            <person name="Tivey A."/>
            <person name="Walsh S.V."/>
            <person name="Warren T."/>
            <person name="Whitehead S."/>
            <person name="Woodward J.R."/>
            <person name="Volckaert G."/>
            <person name="Aert R."/>
            <person name="Robben J."/>
            <person name="Grymonprez B."/>
            <person name="Weltjens I."/>
            <person name="Vanstreels E."/>
            <person name="Rieger M."/>
            <person name="Schaefer M."/>
            <person name="Mueller-Auer S."/>
            <person name="Gabel C."/>
            <person name="Fuchs M."/>
            <person name="Duesterhoeft A."/>
            <person name="Fritzc C."/>
            <person name="Holzer E."/>
            <person name="Moestl D."/>
            <person name="Hilbert H."/>
            <person name="Borzym K."/>
            <person name="Langer I."/>
            <person name="Beck A."/>
            <person name="Lehrach H."/>
            <person name="Reinhardt R."/>
            <person name="Pohl T.M."/>
            <person name="Eger P."/>
            <person name="Zimmermann W."/>
            <person name="Wedler H."/>
            <person name="Wambutt R."/>
            <person name="Purnelle B."/>
            <person name="Goffeau A."/>
            <person name="Cadieu E."/>
            <person name="Dreano S."/>
            <person name="Gloux S."/>
            <person name="Lelaure V."/>
            <person name="Mottier S."/>
            <person name="Galibert F."/>
            <person name="Aves S.J."/>
            <person name="Xiang Z."/>
            <person name="Hunt C."/>
            <person name="Moore K."/>
            <person name="Hurst S.M."/>
            <person name="Lucas M."/>
            <person name="Rochet M."/>
            <person name="Gaillardin C."/>
            <person name="Tallada V.A."/>
            <person name="Garzon A."/>
            <person name="Thode G."/>
            <person name="Daga R.R."/>
            <person name="Cruzado L."/>
            <person name="Jimenez J."/>
            <person name="Sanchez M."/>
            <person name="del Rey F."/>
            <person name="Benito J."/>
            <person name="Dominguez A."/>
            <person name="Revuelta J.L."/>
            <person name="Moreno S."/>
            <person name="Armstrong J."/>
            <person name="Forsburg S.L."/>
            <person name="Cerutti L."/>
            <person name="Lowe T."/>
            <person name="McCombie W.R."/>
            <person name="Paulsen I."/>
            <person name="Potashkin J."/>
            <person name="Shpakovski G.V."/>
            <person name="Ussery D."/>
            <person name="Barrell B.G."/>
            <person name="Nurse P."/>
        </authorList>
    </citation>
    <scope>NUCLEOTIDE SEQUENCE [LARGE SCALE GENOMIC DNA]</scope>
    <source>
        <strain>972 / ATCC 24843</strain>
    </source>
</reference>
<reference key="2">
    <citation type="journal article" date="2006" name="Nat. Biotechnol.">
        <title>ORFeome cloning and global analysis of protein localization in the fission yeast Schizosaccharomyces pombe.</title>
        <authorList>
            <person name="Matsuyama A."/>
            <person name="Arai R."/>
            <person name="Yashiroda Y."/>
            <person name="Shirai A."/>
            <person name="Kamata A."/>
            <person name="Sekido S."/>
            <person name="Kobayashi Y."/>
            <person name="Hashimoto A."/>
            <person name="Hamamoto M."/>
            <person name="Hiraoka Y."/>
            <person name="Horinouchi S."/>
            <person name="Yoshida M."/>
        </authorList>
    </citation>
    <scope>SUBCELLULAR LOCATION [LARGE SCALE ANALYSIS]</scope>
</reference>
<reference key="3">
    <citation type="journal article" date="2008" name="Nat. Struct. Mol. Biol.">
        <title>Fission yeast SWI/SNF and RSC complexes show compositional and functional differences from budding yeast.</title>
        <authorList>
            <person name="Monahan B.J."/>
            <person name="Villen J."/>
            <person name="Marguerat S."/>
            <person name="Baehler J."/>
            <person name="Gygi S.P."/>
            <person name="Winston F."/>
        </authorList>
    </citation>
    <scope>IDENTIFICATION IN THE SWI/SNF COMPLEX</scope>
    <scope>FUNCTION OF THE SWI/SNF COMPLEX</scope>
    <scope>IDENTIFICATION BY MASS SPECTROMETRY</scope>
</reference>
<comment type="function">
    <text evidence="3">Component of the SWI/SNF complex, an ATP-dependent chromatin remodeling complex, required for the positive and negative regulation of gene expression of a large number of genes. It changes chromatin structure by altering DNA-histone contacts within a nucleosome, leading eventually to a change in nucleosome position, thus facilitating or repressing binding of gene-specific transcription factors.</text>
</comment>
<comment type="subunit">
    <text evidence="3">Component of the SWI/SNF global transcription activator complex composed of at least arp9, arp42, snf5, snf22, snf30, sbf59, sol1, ssr1, ssr2, ssr3, ssr4 and tfg3.</text>
</comment>
<comment type="subcellular location">
    <subcellularLocation>
        <location evidence="2">Cytoplasm</location>
    </subcellularLocation>
    <subcellularLocation>
        <location evidence="2">Nucleus</location>
    </subcellularLocation>
</comment>
<proteinExistence type="evidence at protein level"/>
<organism>
    <name type="scientific">Schizosaccharomyces pombe (strain 972 / ATCC 24843)</name>
    <name type="common">Fission yeast</name>
    <dbReference type="NCBI Taxonomy" id="284812"/>
    <lineage>
        <taxon>Eukaryota</taxon>
        <taxon>Fungi</taxon>
        <taxon>Dikarya</taxon>
        <taxon>Ascomycota</taxon>
        <taxon>Taphrinomycotina</taxon>
        <taxon>Schizosaccharomycetes</taxon>
        <taxon>Schizosaccharomycetales</taxon>
        <taxon>Schizosaccharomycetaceae</taxon>
        <taxon>Schizosaccharomyces</taxon>
    </lineage>
</organism>
<protein>
    <recommendedName>
        <fullName>SWI/SNF chromatin-remodeling complex subunit snf30</fullName>
    </recommendedName>
    <alternativeName>
        <fullName>SWI/SNF complex subunit snf30</fullName>
    </alternativeName>
</protein>
<dbReference type="EMBL" id="CU329670">
    <property type="protein sequence ID" value="CAB72232.1"/>
    <property type="molecule type" value="Genomic_DNA"/>
</dbReference>
<dbReference type="PIR" id="T50181">
    <property type="entry name" value="T50181"/>
</dbReference>
<dbReference type="RefSeq" id="NP_593107.1">
    <property type="nucleotide sequence ID" value="NM_001018504.2"/>
</dbReference>
<dbReference type="SMR" id="Q9P7S6"/>
<dbReference type="BioGRID" id="278274">
    <property type="interactions" value="28"/>
</dbReference>
<dbReference type="ComplexPortal" id="CPX-6362">
    <property type="entry name" value="SWI/SNF chromatin remodelling complex"/>
</dbReference>
<dbReference type="DIP" id="DIP-48387N"/>
<dbReference type="FunCoup" id="Q9P7S6">
    <property type="interactions" value="18"/>
</dbReference>
<dbReference type="IntAct" id="Q9P7S6">
    <property type="interactions" value="11"/>
</dbReference>
<dbReference type="STRING" id="284812.Q9P7S6"/>
<dbReference type="iPTMnet" id="Q9P7S6"/>
<dbReference type="PaxDb" id="4896-SPAC23G3.07c.1"/>
<dbReference type="EnsemblFungi" id="SPAC23G3.07c.1">
    <property type="protein sequence ID" value="SPAC23G3.07c.1:pep"/>
    <property type="gene ID" value="SPAC23G3.07c"/>
</dbReference>
<dbReference type="GeneID" id="2541781"/>
<dbReference type="KEGG" id="spo:2541781"/>
<dbReference type="PomBase" id="SPAC23G3.07c">
    <property type="gene designation" value="snf30"/>
</dbReference>
<dbReference type="VEuPathDB" id="FungiDB:SPAC23G3.07c"/>
<dbReference type="HOGENOM" id="CLU_1016188_0_0_1"/>
<dbReference type="InParanoid" id="Q9P7S6"/>
<dbReference type="OMA" id="TRYMRRI"/>
<dbReference type="PRO" id="PR:Q9P7S6"/>
<dbReference type="Proteomes" id="UP000002485">
    <property type="component" value="Chromosome I"/>
</dbReference>
<dbReference type="GO" id="GO:0032153">
    <property type="term" value="C:cell division site"/>
    <property type="evidence" value="ECO:0007005"/>
    <property type="project" value="PomBase"/>
</dbReference>
<dbReference type="GO" id="GO:0000785">
    <property type="term" value="C:chromatin"/>
    <property type="evidence" value="ECO:0000303"/>
    <property type="project" value="ComplexPortal"/>
</dbReference>
<dbReference type="GO" id="GO:0005829">
    <property type="term" value="C:cytosol"/>
    <property type="evidence" value="ECO:0007005"/>
    <property type="project" value="PomBase"/>
</dbReference>
<dbReference type="GO" id="GO:0005634">
    <property type="term" value="C:nucleus"/>
    <property type="evidence" value="ECO:0007005"/>
    <property type="project" value="PomBase"/>
</dbReference>
<dbReference type="GO" id="GO:0016514">
    <property type="term" value="C:SWI/SNF complex"/>
    <property type="evidence" value="ECO:0000314"/>
    <property type="project" value="PomBase"/>
</dbReference>
<dbReference type="GO" id="GO:0006338">
    <property type="term" value="P:chromatin remodeling"/>
    <property type="evidence" value="ECO:0000303"/>
    <property type="project" value="ComplexPortal"/>
</dbReference>
<dbReference type="GO" id="GO:0006357">
    <property type="term" value="P:regulation of transcription by RNA polymerase II"/>
    <property type="evidence" value="ECO:0000304"/>
    <property type="project" value="PomBase"/>
</dbReference>
<dbReference type="GO" id="GO:0045815">
    <property type="term" value="P:transcription initiation-coupled chromatin remodeling"/>
    <property type="evidence" value="ECO:0000305"/>
    <property type="project" value="PomBase"/>
</dbReference>
<keyword id="KW-0156">Chromatin regulator</keyword>
<keyword id="KW-0963">Cytoplasm</keyword>
<keyword id="KW-0539">Nucleus</keyword>
<keyword id="KW-1185">Reference proteome</keyword>
<keyword id="KW-0804">Transcription</keyword>
<keyword id="KW-0805">Transcription regulation</keyword>
<gene>
    <name type="primary">snf30</name>
    <name type="ORF">SPAC23G3.07c</name>
</gene>